<evidence type="ECO:0000250" key="1"/>
<evidence type="ECO:0000256" key="2">
    <source>
        <dbReference type="SAM" id="MobiDB-lite"/>
    </source>
</evidence>
<evidence type="ECO:0000269" key="3">
    <source>
    </source>
</evidence>
<evidence type="ECO:0000305" key="4"/>
<feature type="chain" id="PRO_0000065643" description="Female-specific protein transformer">
    <location>
        <begin position="1"/>
        <end position="178"/>
    </location>
</feature>
<feature type="region of interest" description="Disordered" evidence="2">
    <location>
        <begin position="1"/>
        <end position="117"/>
    </location>
</feature>
<feature type="compositionally biased region" description="Basic and acidic residues" evidence="2">
    <location>
        <begin position="1"/>
        <end position="18"/>
    </location>
</feature>
<feature type="compositionally biased region" description="Basic and acidic residues" evidence="2">
    <location>
        <begin position="25"/>
        <end position="40"/>
    </location>
</feature>
<feature type="compositionally biased region" description="Basic residues" evidence="2">
    <location>
        <begin position="59"/>
        <end position="73"/>
    </location>
</feature>
<feature type="compositionally biased region" description="Basic residues" evidence="2">
    <location>
        <begin position="81"/>
        <end position="108"/>
    </location>
</feature>
<gene>
    <name type="primary">tra</name>
</gene>
<organism>
    <name type="scientific">Drosophila erecta</name>
    <name type="common">Fruit fly</name>
    <dbReference type="NCBI Taxonomy" id="7220"/>
    <lineage>
        <taxon>Eukaryota</taxon>
        <taxon>Metazoa</taxon>
        <taxon>Ecdysozoa</taxon>
        <taxon>Arthropoda</taxon>
        <taxon>Hexapoda</taxon>
        <taxon>Insecta</taxon>
        <taxon>Pterygota</taxon>
        <taxon>Neoptera</taxon>
        <taxon>Endopterygota</taxon>
        <taxon>Diptera</taxon>
        <taxon>Brachycera</taxon>
        <taxon>Muscomorpha</taxon>
        <taxon>Ephydroidea</taxon>
        <taxon>Drosophilidae</taxon>
        <taxon>Drosophila</taxon>
        <taxon>Sophophora</taxon>
    </lineage>
</organism>
<dbReference type="EMBL" id="X66527">
    <property type="protein sequence ID" value="CAA47140.1"/>
    <property type="molecule type" value="Genomic_DNA"/>
</dbReference>
<dbReference type="PIR" id="S26044">
    <property type="entry name" value="S26044"/>
</dbReference>
<dbReference type="SMR" id="Q23935"/>
<dbReference type="OrthoDB" id="7871011at2759"/>
<dbReference type="GO" id="GO:0016607">
    <property type="term" value="C:nuclear speck"/>
    <property type="evidence" value="ECO:0007669"/>
    <property type="project" value="UniProtKB-SubCell"/>
</dbReference>
<dbReference type="GO" id="GO:0036002">
    <property type="term" value="F:pre-mRNA binding"/>
    <property type="evidence" value="ECO:0007669"/>
    <property type="project" value="EnsemblMetazoa"/>
</dbReference>
<dbReference type="GO" id="GO:0030154">
    <property type="term" value="P:cell differentiation"/>
    <property type="evidence" value="ECO:0007669"/>
    <property type="project" value="UniProtKB-KW"/>
</dbReference>
<dbReference type="GO" id="GO:1990399">
    <property type="term" value="P:epithelium regeneration"/>
    <property type="evidence" value="ECO:0007669"/>
    <property type="project" value="EnsemblMetazoa"/>
</dbReference>
<dbReference type="GO" id="GO:0030237">
    <property type="term" value="P:female sex determination"/>
    <property type="evidence" value="ECO:0007669"/>
    <property type="project" value="EnsemblMetazoa"/>
</dbReference>
<dbReference type="GO" id="GO:0046660">
    <property type="term" value="P:female sex differentiation"/>
    <property type="evidence" value="ECO:0007669"/>
    <property type="project" value="EnsemblMetazoa"/>
</dbReference>
<dbReference type="GO" id="GO:0000398">
    <property type="term" value="P:mRNA splicing, via spliceosome"/>
    <property type="evidence" value="ECO:0007669"/>
    <property type="project" value="EnsemblMetazoa"/>
</dbReference>
<dbReference type="GO" id="GO:2000035">
    <property type="term" value="P:regulation of stem cell division"/>
    <property type="evidence" value="ECO:0007669"/>
    <property type="project" value="EnsemblMetazoa"/>
</dbReference>
<dbReference type="InterPro" id="IPR010519">
    <property type="entry name" value="Tra"/>
</dbReference>
<dbReference type="Pfam" id="PF06495">
    <property type="entry name" value="Transformer"/>
    <property type="match status" value="1"/>
</dbReference>
<name>TRSF_DROER</name>
<keyword id="KW-0221">Differentiation</keyword>
<keyword id="KW-0539">Nucleus</keyword>
<keyword id="KW-0726">Sexual differentiation</keyword>
<sequence>MKMDADSSCGADHRDSHGSRSRSRREREQHGRTSNRDSKKKEHKVPYFADEVREQDRVRRLRKRSPRSTRRSASRSQSSDRRHRHRSRSRNRSRSRSSERRRRQRSPRRYNPPPKIINYYLQVPPQDFYGMSGMQQRFGYQRLPHPPPFPPAPYRFRQRPPFLGAPRFGYRNAWRPPY</sequence>
<accession>Q23935</accession>
<reference key="1">
    <citation type="journal article" date="1992" name="Genetics">
        <title>Interspecific comparison of the transformer gene of Drosophila reveals an unusually high degree of evolutionary divergence.</title>
        <authorList>
            <person name="O'Neil M.T."/>
            <person name="Belote J.M."/>
        </authorList>
    </citation>
    <scope>NUCLEOTIDE SEQUENCE [GENOMIC DNA]</scope>
    <scope>FUNCTION</scope>
</reference>
<protein>
    <recommendedName>
        <fullName>Female-specific protein transformer</fullName>
    </recommendedName>
</protein>
<proteinExistence type="inferred from homology"/>
<comment type="function">
    <text evidence="3">Member of the regulatory pathway controlling female somatic sexual differentiation, regulated by Sxl. Activates dsx female-specific splicing by promoting the formation of a splicing enhancer complex which consists of tra, tra2 and sr proteins.</text>
</comment>
<comment type="subcellular location">
    <subcellularLocation>
        <location evidence="1">Nucleus speckle</location>
    </subcellularLocation>
    <text evidence="1">Speckled subnuclear compartment.</text>
</comment>
<comment type="domain">
    <text evidence="1">RS domain directs localization of proteins to the speckled subnuclear compartment and the purpose of this localization is to allow colocalization and co-concentration of components of the splicing and splicing regulatory machinery to permit relatively high rates and/or efficiencies of reaction and interaction.</text>
</comment>
<comment type="miscellaneous">
    <text>The sexual regulation of tra occurs through a mechanism of sex-specific alternative RNA splicing. The non-sex-specific RNA expressed in males is not translated.</text>
</comment>
<comment type="caution">
    <text evidence="4">It is uncertain whether Met-1 or Met-3 is the initiator.</text>
</comment>